<reference key="1">
    <citation type="submission" date="2008-10" db="EMBL/GenBank/DDBJ databases">
        <title>Genome sequence of Bacillus cereus G9842.</title>
        <authorList>
            <person name="Dodson R.J."/>
            <person name="Durkin A.S."/>
            <person name="Rosovitz M.J."/>
            <person name="Rasko D.A."/>
            <person name="Hoffmaster A."/>
            <person name="Ravel J."/>
            <person name="Sutton G."/>
        </authorList>
    </citation>
    <scope>NUCLEOTIDE SEQUENCE [LARGE SCALE GENOMIC DNA]</scope>
    <source>
        <strain>G9842</strain>
    </source>
</reference>
<name>TRMFO_BACC2</name>
<feature type="chain" id="PRO_1000135887" description="Methylenetetrahydrofolate--tRNA-(uracil-5-)-methyltransferase TrmFO">
    <location>
        <begin position="1"/>
        <end position="434"/>
    </location>
</feature>
<feature type="binding site" evidence="1">
    <location>
        <begin position="10"/>
        <end position="15"/>
    </location>
    <ligand>
        <name>FAD</name>
        <dbReference type="ChEBI" id="CHEBI:57692"/>
    </ligand>
</feature>
<dbReference type="EC" id="2.1.1.74" evidence="1"/>
<dbReference type="EMBL" id="CP001186">
    <property type="protein sequence ID" value="ACK96394.1"/>
    <property type="molecule type" value="Genomic_DNA"/>
</dbReference>
<dbReference type="RefSeq" id="WP_000213006.1">
    <property type="nucleotide sequence ID" value="NC_011772.1"/>
</dbReference>
<dbReference type="SMR" id="B7IUJ1"/>
<dbReference type="GeneID" id="72450511"/>
<dbReference type="KEGG" id="bcg:BCG9842_B1313"/>
<dbReference type="HOGENOM" id="CLU_033057_1_0_9"/>
<dbReference type="Proteomes" id="UP000006744">
    <property type="component" value="Chromosome"/>
</dbReference>
<dbReference type="GO" id="GO:0005829">
    <property type="term" value="C:cytosol"/>
    <property type="evidence" value="ECO:0007669"/>
    <property type="project" value="TreeGrafter"/>
</dbReference>
<dbReference type="GO" id="GO:0050660">
    <property type="term" value="F:flavin adenine dinucleotide binding"/>
    <property type="evidence" value="ECO:0007669"/>
    <property type="project" value="UniProtKB-UniRule"/>
</dbReference>
<dbReference type="GO" id="GO:0047151">
    <property type="term" value="F:tRNA (uracil(54)-C5)-methyltransferase activity, 5,10-methylenetetrahydrofolate-dependent"/>
    <property type="evidence" value="ECO:0007669"/>
    <property type="project" value="UniProtKB-UniRule"/>
</dbReference>
<dbReference type="GO" id="GO:0030488">
    <property type="term" value="P:tRNA methylation"/>
    <property type="evidence" value="ECO:0007669"/>
    <property type="project" value="TreeGrafter"/>
</dbReference>
<dbReference type="GO" id="GO:0002098">
    <property type="term" value="P:tRNA wobble uridine modification"/>
    <property type="evidence" value="ECO:0007669"/>
    <property type="project" value="TreeGrafter"/>
</dbReference>
<dbReference type="FunFam" id="3.50.50.60:FF:000035">
    <property type="entry name" value="Methylenetetrahydrofolate--tRNA-(uracil-5-)-methyltransferase TrmFO"/>
    <property type="match status" value="1"/>
</dbReference>
<dbReference type="FunFam" id="3.50.50.60:FF:000040">
    <property type="entry name" value="Methylenetetrahydrofolate--tRNA-(uracil-5-)-methyltransferase TrmFO"/>
    <property type="match status" value="1"/>
</dbReference>
<dbReference type="Gene3D" id="3.50.50.60">
    <property type="entry name" value="FAD/NAD(P)-binding domain"/>
    <property type="match status" value="2"/>
</dbReference>
<dbReference type="HAMAP" id="MF_01037">
    <property type="entry name" value="TrmFO"/>
    <property type="match status" value="1"/>
</dbReference>
<dbReference type="InterPro" id="IPR036188">
    <property type="entry name" value="FAD/NAD-bd_sf"/>
</dbReference>
<dbReference type="InterPro" id="IPR002218">
    <property type="entry name" value="MnmG-rel"/>
</dbReference>
<dbReference type="InterPro" id="IPR020595">
    <property type="entry name" value="MnmG-rel_CS"/>
</dbReference>
<dbReference type="InterPro" id="IPR040131">
    <property type="entry name" value="MnmG_N"/>
</dbReference>
<dbReference type="InterPro" id="IPR004417">
    <property type="entry name" value="TrmFO"/>
</dbReference>
<dbReference type="NCBIfam" id="TIGR00137">
    <property type="entry name" value="gid_trmFO"/>
    <property type="match status" value="1"/>
</dbReference>
<dbReference type="NCBIfam" id="NF003739">
    <property type="entry name" value="PRK05335.1"/>
    <property type="match status" value="1"/>
</dbReference>
<dbReference type="PANTHER" id="PTHR11806">
    <property type="entry name" value="GLUCOSE INHIBITED DIVISION PROTEIN A"/>
    <property type="match status" value="1"/>
</dbReference>
<dbReference type="PANTHER" id="PTHR11806:SF2">
    <property type="entry name" value="METHYLENETETRAHYDROFOLATE--TRNA-(URACIL-5-)-METHYLTRANSFERASE TRMFO"/>
    <property type="match status" value="1"/>
</dbReference>
<dbReference type="Pfam" id="PF01134">
    <property type="entry name" value="GIDA"/>
    <property type="match status" value="1"/>
</dbReference>
<dbReference type="SUPFAM" id="SSF51905">
    <property type="entry name" value="FAD/NAD(P)-binding domain"/>
    <property type="match status" value="1"/>
</dbReference>
<dbReference type="PROSITE" id="PS01281">
    <property type="entry name" value="GIDA_2"/>
    <property type="match status" value="1"/>
</dbReference>
<keyword id="KW-0963">Cytoplasm</keyword>
<keyword id="KW-0274">FAD</keyword>
<keyword id="KW-0285">Flavoprotein</keyword>
<keyword id="KW-0489">Methyltransferase</keyword>
<keyword id="KW-0520">NAD</keyword>
<keyword id="KW-0521">NADP</keyword>
<keyword id="KW-0808">Transferase</keyword>
<keyword id="KW-0819">tRNA processing</keyword>
<sequence>MTTQVVNVIGAGLAGSEAAYQIAKRGVQVRLYEMRPVRQTPAHHTDKFAELVCSNSLRANTLTNAVGVIKEEMRLMDSVIIRAADECSVPAGGALAVDRHEFAAKVTEYVKNHPNVTVVNEELTEIPEGPTIIATGPLTSPDLAAQLKELTGEDYFYFYDAAAPIVEKDSIDMNKVYLKSRYDKGEAAYLNCPMTEEEFDRFYEALIAAETVPLKEFEKEIFFEGCMPVEVMASRGRQTLVFGPMKPVGLEDPKTGKTPYAVVQLRQDDAAGTLYNIVGFQTHLKWGPQKEVLQLIPGLENAEIVRYGVMHRNTFINSPNLLRPTYQYKQRDDLFFAGQMTGVEGYVESAASGLLAGINAARLVQGEEPVVLPSVTAMGSMANYITATNAKNFQPMNANFGLFAPLEKKIKKKAERNEAYATRALETIQNFVNI</sequence>
<comment type="function">
    <text evidence="1">Catalyzes the folate-dependent formation of 5-methyl-uridine at position 54 (M-5-U54) in all tRNAs.</text>
</comment>
<comment type="catalytic activity">
    <reaction evidence="1">
        <text>uridine(54) in tRNA + (6R)-5,10-methylene-5,6,7,8-tetrahydrofolate + NADH + H(+) = 5-methyluridine(54) in tRNA + (6S)-5,6,7,8-tetrahydrofolate + NAD(+)</text>
        <dbReference type="Rhea" id="RHEA:16873"/>
        <dbReference type="Rhea" id="RHEA-COMP:10167"/>
        <dbReference type="Rhea" id="RHEA-COMP:10193"/>
        <dbReference type="ChEBI" id="CHEBI:15378"/>
        <dbReference type="ChEBI" id="CHEBI:15636"/>
        <dbReference type="ChEBI" id="CHEBI:57453"/>
        <dbReference type="ChEBI" id="CHEBI:57540"/>
        <dbReference type="ChEBI" id="CHEBI:57945"/>
        <dbReference type="ChEBI" id="CHEBI:65315"/>
        <dbReference type="ChEBI" id="CHEBI:74447"/>
        <dbReference type="EC" id="2.1.1.74"/>
    </reaction>
</comment>
<comment type="catalytic activity">
    <reaction evidence="1">
        <text>uridine(54) in tRNA + (6R)-5,10-methylene-5,6,7,8-tetrahydrofolate + NADPH + H(+) = 5-methyluridine(54) in tRNA + (6S)-5,6,7,8-tetrahydrofolate + NADP(+)</text>
        <dbReference type="Rhea" id="RHEA:62372"/>
        <dbReference type="Rhea" id="RHEA-COMP:10167"/>
        <dbReference type="Rhea" id="RHEA-COMP:10193"/>
        <dbReference type="ChEBI" id="CHEBI:15378"/>
        <dbReference type="ChEBI" id="CHEBI:15636"/>
        <dbReference type="ChEBI" id="CHEBI:57453"/>
        <dbReference type="ChEBI" id="CHEBI:57783"/>
        <dbReference type="ChEBI" id="CHEBI:58349"/>
        <dbReference type="ChEBI" id="CHEBI:65315"/>
        <dbReference type="ChEBI" id="CHEBI:74447"/>
        <dbReference type="EC" id="2.1.1.74"/>
    </reaction>
</comment>
<comment type="cofactor">
    <cofactor evidence="1">
        <name>FAD</name>
        <dbReference type="ChEBI" id="CHEBI:57692"/>
    </cofactor>
</comment>
<comment type="subcellular location">
    <subcellularLocation>
        <location evidence="1">Cytoplasm</location>
    </subcellularLocation>
</comment>
<comment type="similarity">
    <text evidence="1">Belongs to the MnmG family. TrmFO subfamily.</text>
</comment>
<protein>
    <recommendedName>
        <fullName evidence="1">Methylenetetrahydrofolate--tRNA-(uracil-5-)-methyltransferase TrmFO</fullName>
        <ecNumber evidence="1">2.1.1.74</ecNumber>
    </recommendedName>
    <alternativeName>
        <fullName evidence="1">Folate-dependent tRNA (uracil-5-)-methyltransferase</fullName>
    </alternativeName>
    <alternativeName>
        <fullName evidence="1">Folate-dependent tRNA(M-5-U54)-methyltransferase</fullName>
    </alternativeName>
</protein>
<proteinExistence type="inferred from homology"/>
<accession>B7IUJ1</accession>
<evidence type="ECO:0000255" key="1">
    <source>
        <dbReference type="HAMAP-Rule" id="MF_01037"/>
    </source>
</evidence>
<gene>
    <name evidence="1" type="primary">trmFO</name>
    <name type="ordered locus">BCG9842_B1313</name>
</gene>
<organism>
    <name type="scientific">Bacillus cereus (strain G9842)</name>
    <dbReference type="NCBI Taxonomy" id="405531"/>
    <lineage>
        <taxon>Bacteria</taxon>
        <taxon>Bacillati</taxon>
        <taxon>Bacillota</taxon>
        <taxon>Bacilli</taxon>
        <taxon>Bacillales</taxon>
        <taxon>Bacillaceae</taxon>
        <taxon>Bacillus</taxon>
        <taxon>Bacillus cereus group</taxon>
    </lineage>
</organism>